<comment type="function">
    <text evidence="1 3">Catalyzes the sequential decarboxylation of the four acetate side chains of uroporphyrinogen to form coproporphyrinogen and participates in the fifth step in the heme biosynthetic pathway. Isomer I or isomer III of uroporphyrinogen may serve as substrate, but only coproporphyrinogen III can ultimately be converted to heme (By similarity). In vitro also decarboxylates pentacarboxylate porphyrinogen I (PubMed:9806541).</text>
</comment>
<comment type="catalytic activity">
    <reaction evidence="1">
        <text>uroporphyrinogen III + 4 H(+) = coproporphyrinogen III + 4 CO2</text>
        <dbReference type="Rhea" id="RHEA:19865"/>
        <dbReference type="ChEBI" id="CHEBI:15378"/>
        <dbReference type="ChEBI" id="CHEBI:16526"/>
        <dbReference type="ChEBI" id="CHEBI:57308"/>
        <dbReference type="ChEBI" id="CHEBI:57309"/>
        <dbReference type="EC" id="4.1.1.37"/>
    </reaction>
    <physiologicalReaction direction="left-to-right" evidence="1">
        <dbReference type="Rhea" id="RHEA:19866"/>
    </physiologicalReaction>
</comment>
<comment type="catalytic activity">
    <reaction evidence="1">
        <text>uroporphyrinogen I + 4 H(+) = coproporphyrinogen I + 4 CO2</text>
        <dbReference type="Rhea" id="RHEA:31239"/>
        <dbReference type="ChEBI" id="CHEBI:15378"/>
        <dbReference type="ChEBI" id="CHEBI:16526"/>
        <dbReference type="ChEBI" id="CHEBI:62626"/>
        <dbReference type="ChEBI" id="CHEBI:62631"/>
    </reaction>
    <physiologicalReaction direction="left-to-right" evidence="1">
        <dbReference type="Rhea" id="RHEA:31240"/>
    </physiologicalReaction>
</comment>
<comment type="pathway">
    <text evidence="1">Porphyrin-containing compound metabolism; protoporphyrin-IX biosynthesis; coproporphyrinogen-III from 5-aminolevulinate: step 4/4.</text>
</comment>
<comment type="subunit">
    <text evidence="1">Homodimer.</text>
</comment>
<comment type="subcellular location">
    <subcellularLocation>
        <location evidence="2">Cytoplasm</location>
        <location evidence="2">Cytosol</location>
    </subcellularLocation>
</comment>
<comment type="similarity">
    <text evidence="4">Belongs to the uroporphyrinogen decarboxylase family.</text>
</comment>
<proteinExistence type="evidence at protein level"/>
<evidence type="ECO:0000250" key="1">
    <source>
        <dbReference type="UniProtKB" id="P06132"/>
    </source>
</evidence>
<evidence type="ECO:0000250" key="2">
    <source>
        <dbReference type="UniProtKB" id="P70697"/>
    </source>
</evidence>
<evidence type="ECO:0000269" key="3">
    <source>
    </source>
</evidence>
<evidence type="ECO:0000305" key="4"/>
<name>DCUP_DANRE</name>
<accession>Q9PTS2</accession>
<sequence>MMDKDSFILPKDFPELRNDTFLRAARGEEIEHIPVWCMRQAGRYLPEFRESRAGKDFFETCRSPEACCELTLQPLRRFPFDAAIIFSDILVVPQAMGMEVQMCPGKGPTFPEPLKEPEDLQRLKTQVDVYSELDYVFKAITLTRHKIEGKVPLIGFTGAPWTLMSYMIEGGGSATHSKAKRWLYRYPEASHKLLSQLTDVIVEYLLGQVKAGAQALQVFESHTGCLGPVEFKEFSLPYLRDIARRVKDKIKESGLDNVPMIVFAKDGHYGLEDLSESAYEVVGLDWTIDPRSARVRTGGKVSLQGNMDPCALYGTKESISEIVRRMLEGFGTKGYIANLGHGLYPDMDPENVGAFVEAVHNHSRQLLKR</sequence>
<gene>
    <name evidence="1" type="primary">urod</name>
</gene>
<feature type="chain" id="PRO_0000187572" description="Uroporphyrinogen decarboxylase">
    <location>
        <begin position="1"/>
        <end position="369"/>
    </location>
</feature>
<feature type="binding site" evidence="1">
    <location>
        <position position="39"/>
    </location>
    <ligand>
        <name>coproporphyrinogen I</name>
        <dbReference type="ChEBI" id="CHEBI:62631"/>
    </ligand>
</feature>
<feature type="binding site" evidence="1">
    <location>
        <position position="39"/>
    </location>
    <ligand>
        <name>coproporphyrinogen III</name>
        <dbReference type="ChEBI" id="CHEBI:57309"/>
    </ligand>
</feature>
<feature type="binding site" evidence="1">
    <location>
        <position position="41"/>
    </location>
    <ligand>
        <name>coproporphyrinogen I</name>
        <dbReference type="ChEBI" id="CHEBI:62631"/>
    </ligand>
</feature>
<feature type="binding site" evidence="1">
    <location>
        <position position="41"/>
    </location>
    <ligand>
        <name>coproporphyrinogen III</name>
        <dbReference type="ChEBI" id="CHEBI:57309"/>
    </ligand>
</feature>
<feature type="binding site" evidence="1">
    <location>
        <position position="43"/>
    </location>
    <ligand>
        <name>coproporphyrinogen I</name>
        <dbReference type="ChEBI" id="CHEBI:62631"/>
    </ligand>
</feature>
<feature type="binding site" evidence="1">
    <location>
        <position position="43"/>
    </location>
    <ligand>
        <name>coproporphyrinogen III</name>
        <dbReference type="ChEBI" id="CHEBI:57309"/>
    </ligand>
</feature>
<feature type="binding site" evidence="1">
    <location>
        <position position="52"/>
    </location>
    <ligand>
        <name>coproporphyrinogen I</name>
        <dbReference type="ChEBI" id="CHEBI:62631"/>
    </ligand>
</feature>
<feature type="binding site" evidence="1">
    <location>
        <position position="88"/>
    </location>
    <ligand>
        <name>coproporphyrinogen I</name>
        <dbReference type="ChEBI" id="CHEBI:62631"/>
    </ligand>
</feature>
<feature type="binding site" evidence="1">
    <location>
        <position position="88"/>
    </location>
    <ligand>
        <name>coproporphyrinogen III</name>
        <dbReference type="ChEBI" id="CHEBI:57309"/>
    </ligand>
</feature>
<feature type="binding site" evidence="1">
    <location>
        <position position="166"/>
    </location>
    <ligand>
        <name>coproporphyrinogen I</name>
        <dbReference type="ChEBI" id="CHEBI:62631"/>
    </ligand>
</feature>
<feature type="binding site" evidence="1">
    <location>
        <position position="166"/>
    </location>
    <ligand>
        <name>coproporphyrinogen III</name>
        <dbReference type="ChEBI" id="CHEBI:57309"/>
    </ligand>
</feature>
<feature type="binding site" evidence="1">
    <location>
        <position position="221"/>
    </location>
    <ligand>
        <name>coproporphyrinogen I</name>
        <dbReference type="ChEBI" id="CHEBI:62631"/>
    </ligand>
</feature>
<feature type="binding site" evidence="1">
    <location>
        <position position="221"/>
    </location>
    <ligand>
        <name>coproporphyrinogen III</name>
        <dbReference type="ChEBI" id="CHEBI:57309"/>
    </ligand>
</feature>
<feature type="binding site" evidence="1">
    <location>
        <position position="341"/>
    </location>
    <ligand>
        <name>coproporphyrinogen I</name>
        <dbReference type="ChEBI" id="CHEBI:62631"/>
    </ligand>
</feature>
<feature type="binding site" evidence="1">
    <location>
        <position position="341"/>
    </location>
    <ligand>
        <name>coproporphyrinogen III</name>
        <dbReference type="ChEBI" id="CHEBI:57309"/>
    </ligand>
</feature>
<feature type="site" description="Transition state stabilizer" evidence="1">
    <location>
        <position position="88"/>
    </location>
</feature>
<feature type="mutagenesis site" description="Reduces uroporphyrinogen decarboxylase activity." evidence="3">
    <original>M</original>
    <variation>R</variation>
    <location>
        <position position="38"/>
    </location>
</feature>
<reference key="1">
    <citation type="journal article" date="1998" name="Nat. Genet.">
        <title>A zebrafish model for hepatoerythropoietic porphyria.</title>
        <authorList>
            <person name="Wang H."/>
            <person name="Long Q."/>
            <person name="Marty S.D."/>
            <person name="Sassa S."/>
            <person name="Lin S."/>
        </authorList>
    </citation>
    <scope>NUCLEOTIDE SEQUENCE [MRNA]</scope>
    <scope>FUNCTION</scope>
    <scope>MUTAGENESIS OF MET-38</scope>
</reference>
<keyword id="KW-0963">Cytoplasm</keyword>
<keyword id="KW-0210">Decarboxylase</keyword>
<keyword id="KW-0350">Heme biosynthesis</keyword>
<keyword id="KW-0456">Lyase</keyword>
<keyword id="KW-0627">Porphyrin biosynthesis</keyword>
<keyword id="KW-1185">Reference proteome</keyword>
<organism>
    <name type="scientific">Danio rerio</name>
    <name type="common">Zebrafish</name>
    <name type="synonym">Brachydanio rerio</name>
    <dbReference type="NCBI Taxonomy" id="7955"/>
    <lineage>
        <taxon>Eukaryota</taxon>
        <taxon>Metazoa</taxon>
        <taxon>Chordata</taxon>
        <taxon>Craniata</taxon>
        <taxon>Vertebrata</taxon>
        <taxon>Euteleostomi</taxon>
        <taxon>Actinopterygii</taxon>
        <taxon>Neopterygii</taxon>
        <taxon>Teleostei</taxon>
        <taxon>Ostariophysi</taxon>
        <taxon>Cypriniformes</taxon>
        <taxon>Danionidae</taxon>
        <taxon>Danioninae</taxon>
        <taxon>Danio</taxon>
    </lineage>
</organism>
<protein>
    <recommendedName>
        <fullName evidence="1">Uroporphyrinogen decarboxylase</fullName>
        <shortName>UPD</shortName>
        <shortName>URO-D</shortName>
        <ecNumber evidence="1">4.1.1.37</ecNumber>
    </recommendedName>
</protein>
<dbReference type="EC" id="4.1.1.37" evidence="1"/>
<dbReference type="EMBL" id="AF095639">
    <property type="protein sequence ID" value="AAF14346.1"/>
    <property type="molecule type" value="mRNA"/>
</dbReference>
<dbReference type="RefSeq" id="NP_571422.1">
    <property type="nucleotide sequence ID" value="NM_131347.1"/>
</dbReference>
<dbReference type="SMR" id="Q9PTS2"/>
<dbReference type="FunCoup" id="Q9PTS2">
    <property type="interactions" value="1223"/>
</dbReference>
<dbReference type="STRING" id="7955.ENSDARP00000023867"/>
<dbReference type="PaxDb" id="7955-ENSDARP00000023867"/>
<dbReference type="Ensembl" id="ENSDART00000014568">
    <property type="protein sequence ID" value="ENSDARP00000023867"/>
    <property type="gene ID" value="ENSDARG00000006818"/>
</dbReference>
<dbReference type="GeneID" id="30617"/>
<dbReference type="KEGG" id="dre:30617"/>
<dbReference type="AGR" id="ZFIN:ZDB-GENE-000208-18"/>
<dbReference type="CTD" id="7389"/>
<dbReference type="ZFIN" id="ZDB-GENE-000208-18">
    <property type="gene designation" value="urod"/>
</dbReference>
<dbReference type="eggNOG" id="KOG2872">
    <property type="taxonomic scope" value="Eukaryota"/>
</dbReference>
<dbReference type="HOGENOM" id="CLU_040933_0_0_1"/>
<dbReference type="InParanoid" id="Q9PTS2"/>
<dbReference type="OMA" id="LWLMRQA"/>
<dbReference type="OrthoDB" id="339900at2759"/>
<dbReference type="PhylomeDB" id="Q9PTS2"/>
<dbReference type="TreeFam" id="TF300744"/>
<dbReference type="Reactome" id="R-DRE-189451">
    <property type="pathway name" value="Heme biosynthesis"/>
</dbReference>
<dbReference type="UniPathway" id="UPA00251">
    <property type="reaction ID" value="UER00321"/>
</dbReference>
<dbReference type="PRO" id="PR:Q9PTS2"/>
<dbReference type="Proteomes" id="UP000000437">
    <property type="component" value="Chromosome 2"/>
</dbReference>
<dbReference type="Bgee" id="ENSDARG00000006818">
    <property type="expression patterns" value="Expressed in mature ovarian follicle and 28 other cell types or tissues"/>
</dbReference>
<dbReference type="GO" id="GO:0005829">
    <property type="term" value="C:cytosol"/>
    <property type="evidence" value="ECO:0000318"/>
    <property type="project" value="GO_Central"/>
</dbReference>
<dbReference type="GO" id="GO:0004853">
    <property type="term" value="F:uroporphyrinogen decarboxylase activity"/>
    <property type="evidence" value="ECO:0000314"/>
    <property type="project" value="ZFIN"/>
</dbReference>
<dbReference type="GO" id="GO:0006783">
    <property type="term" value="P:heme biosynthetic process"/>
    <property type="evidence" value="ECO:0000318"/>
    <property type="project" value="GO_Central"/>
</dbReference>
<dbReference type="GO" id="GO:0006787">
    <property type="term" value="P:porphyrin-containing compound catabolic process"/>
    <property type="evidence" value="ECO:0000250"/>
    <property type="project" value="UniProtKB"/>
</dbReference>
<dbReference type="GO" id="GO:0006778">
    <property type="term" value="P:porphyrin-containing compound metabolic process"/>
    <property type="evidence" value="ECO:0000314"/>
    <property type="project" value="ZFIN"/>
</dbReference>
<dbReference type="GO" id="GO:0006782">
    <property type="term" value="P:protoporphyrinogen IX biosynthetic process"/>
    <property type="evidence" value="ECO:0007669"/>
    <property type="project" value="UniProtKB-UniPathway"/>
</dbReference>
<dbReference type="CDD" id="cd00717">
    <property type="entry name" value="URO-D"/>
    <property type="match status" value="1"/>
</dbReference>
<dbReference type="FunFam" id="3.20.20.210:FF:000004">
    <property type="entry name" value="Uroporphyrinogen decarboxylase"/>
    <property type="match status" value="1"/>
</dbReference>
<dbReference type="Gene3D" id="3.20.20.210">
    <property type="match status" value="1"/>
</dbReference>
<dbReference type="HAMAP" id="MF_00218">
    <property type="entry name" value="URO_D"/>
    <property type="match status" value="1"/>
</dbReference>
<dbReference type="InterPro" id="IPR038071">
    <property type="entry name" value="UROD/MetE-like_sf"/>
</dbReference>
<dbReference type="InterPro" id="IPR006361">
    <property type="entry name" value="Uroporphyrinogen_deCO2ase_HemE"/>
</dbReference>
<dbReference type="InterPro" id="IPR000257">
    <property type="entry name" value="Uroporphyrinogen_deCOase"/>
</dbReference>
<dbReference type="NCBIfam" id="TIGR01464">
    <property type="entry name" value="hemE"/>
    <property type="match status" value="1"/>
</dbReference>
<dbReference type="PANTHER" id="PTHR21091">
    <property type="entry name" value="METHYLTETRAHYDROFOLATE:HOMOCYSTEINE METHYLTRANSFERASE RELATED"/>
    <property type="match status" value="1"/>
</dbReference>
<dbReference type="PANTHER" id="PTHR21091:SF169">
    <property type="entry name" value="UROPORPHYRINOGEN DECARBOXYLASE"/>
    <property type="match status" value="1"/>
</dbReference>
<dbReference type="Pfam" id="PF01208">
    <property type="entry name" value="URO-D"/>
    <property type="match status" value="1"/>
</dbReference>
<dbReference type="SUPFAM" id="SSF51726">
    <property type="entry name" value="UROD/MetE-like"/>
    <property type="match status" value="1"/>
</dbReference>
<dbReference type="PROSITE" id="PS00906">
    <property type="entry name" value="UROD_1"/>
    <property type="match status" value="1"/>
</dbReference>
<dbReference type="PROSITE" id="PS00907">
    <property type="entry name" value="UROD_2"/>
    <property type="match status" value="1"/>
</dbReference>